<accession>Q9NV35</accession>
<accession>A2RUR6</accession>
<accession>Q32Q27</accession>
<accession>Q6P2C9</accession>
<organism>
    <name type="scientific">Homo sapiens</name>
    <name type="common">Human</name>
    <dbReference type="NCBI Taxonomy" id="9606"/>
    <lineage>
        <taxon>Eukaryota</taxon>
        <taxon>Metazoa</taxon>
        <taxon>Chordata</taxon>
        <taxon>Craniata</taxon>
        <taxon>Vertebrata</taxon>
        <taxon>Euteleostomi</taxon>
        <taxon>Mammalia</taxon>
        <taxon>Eutheria</taxon>
        <taxon>Euarchontoglires</taxon>
        <taxon>Primates</taxon>
        <taxon>Haplorrhini</taxon>
        <taxon>Catarrhini</taxon>
        <taxon>Hominidae</taxon>
        <taxon>Homo</taxon>
    </lineage>
</organism>
<dbReference type="EC" id="3.6.1.9" evidence="5 7 8"/>
<dbReference type="EMBL" id="AK001818">
    <property type="protein sequence ID" value="BAA91925.1"/>
    <property type="molecule type" value="mRNA"/>
</dbReference>
<dbReference type="EMBL" id="AL158196">
    <property type="status" value="NOT_ANNOTATED_CDS"/>
    <property type="molecule type" value="Genomic_DNA"/>
</dbReference>
<dbReference type="EMBL" id="CH471075">
    <property type="protein sequence ID" value="EAX08782.1"/>
    <property type="molecule type" value="Genomic_DNA"/>
</dbReference>
<dbReference type="EMBL" id="BC064607">
    <property type="protein sequence ID" value="AAH64607.1"/>
    <property type="molecule type" value="mRNA"/>
</dbReference>
<dbReference type="EMBL" id="BC107875">
    <property type="protein sequence ID" value="AAI07876.1"/>
    <property type="molecule type" value="mRNA"/>
</dbReference>
<dbReference type="EMBL" id="BC133015">
    <property type="protein sequence ID" value="AAI33016.1"/>
    <property type="molecule type" value="mRNA"/>
</dbReference>
<dbReference type="EMBL" id="BC133017">
    <property type="protein sequence ID" value="AAI33018.1"/>
    <property type="molecule type" value="mRNA"/>
</dbReference>
<dbReference type="CCDS" id="CCDS9407.1"/>
<dbReference type="RefSeq" id="NP_001291674.1">
    <property type="nucleotide sequence ID" value="NM_001304745.1"/>
</dbReference>
<dbReference type="RefSeq" id="NP_060753.1">
    <property type="nucleotide sequence ID" value="NM_018283.4"/>
</dbReference>
<dbReference type="PDB" id="5BON">
    <property type="method" value="X-ray"/>
    <property type="resolution" value="1.80 A"/>
    <property type="chains" value="A/B/C/D/E/F/G/H=1-164"/>
</dbReference>
<dbReference type="PDB" id="5LPG">
    <property type="method" value="X-ray"/>
    <property type="resolution" value="1.70 A"/>
    <property type="chains" value="A/B=1-164"/>
</dbReference>
<dbReference type="PDB" id="6T5J">
    <property type="method" value="X-ray"/>
    <property type="resolution" value="1.60 A"/>
    <property type="chains" value="A/B=1-164"/>
</dbReference>
<dbReference type="PDB" id="7AOM">
    <property type="method" value="X-ray"/>
    <property type="resolution" value="1.95 A"/>
    <property type="chains" value="A/B=1-164"/>
</dbReference>
<dbReference type="PDB" id="7AOP">
    <property type="method" value="X-ray"/>
    <property type="resolution" value="2.35 A"/>
    <property type="chains" value="A=1-164"/>
</dbReference>
<dbReference type="PDB" id="7B63">
    <property type="method" value="X-ray"/>
    <property type="resolution" value="1.60 A"/>
    <property type="chains" value="A/B=1-164"/>
</dbReference>
<dbReference type="PDB" id="7B64">
    <property type="method" value="X-ray"/>
    <property type="resolution" value="1.50 A"/>
    <property type="chains" value="A=1-164"/>
</dbReference>
<dbReference type="PDB" id="7B65">
    <property type="method" value="X-ray"/>
    <property type="resolution" value="1.60 A"/>
    <property type="chains" value="A/B=1-164"/>
</dbReference>
<dbReference type="PDB" id="7B66">
    <property type="method" value="X-ray"/>
    <property type="resolution" value="1.60 A"/>
    <property type="chains" value="A/B/C/D=1-164"/>
</dbReference>
<dbReference type="PDB" id="7B67">
    <property type="method" value="X-ray"/>
    <property type="resolution" value="1.45 A"/>
    <property type="chains" value="A/B=1-164"/>
</dbReference>
<dbReference type="PDB" id="7B7V">
    <property type="method" value="X-ray"/>
    <property type="resolution" value="1.60 A"/>
    <property type="chains" value="A/B=1-164"/>
</dbReference>
<dbReference type="PDB" id="7NR6">
    <property type="method" value="X-ray"/>
    <property type="resolution" value="1.80 A"/>
    <property type="chains" value="A/B=1-164"/>
</dbReference>
<dbReference type="PDB" id="7R0D">
    <property type="method" value="X-ray"/>
    <property type="resolution" value="1.70 A"/>
    <property type="chains" value="AAA/BBB=1-164"/>
</dbReference>
<dbReference type="PDBsum" id="5BON"/>
<dbReference type="PDBsum" id="5LPG"/>
<dbReference type="PDBsum" id="6T5J"/>
<dbReference type="PDBsum" id="7AOM"/>
<dbReference type="PDBsum" id="7AOP"/>
<dbReference type="PDBsum" id="7B63"/>
<dbReference type="PDBsum" id="7B64"/>
<dbReference type="PDBsum" id="7B65"/>
<dbReference type="PDBsum" id="7B66"/>
<dbReference type="PDBsum" id="7B67"/>
<dbReference type="PDBsum" id="7B7V"/>
<dbReference type="PDBsum" id="7NR6"/>
<dbReference type="PDBsum" id="7R0D"/>
<dbReference type="SMR" id="Q9NV35"/>
<dbReference type="BioGRID" id="120559">
    <property type="interactions" value="10"/>
</dbReference>
<dbReference type="FunCoup" id="Q9NV35">
    <property type="interactions" value="516"/>
</dbReference>
<dbReference type="IntAct" id="Q9NV35">
    <property type="interactions" value="8"/>
</dbReference>
<dbReference type="STRING" id="9606.ENSP00000258662"/>
<dbReference type="BindingDB" id="Q9NV35"/>
<dbReference type="ChEMBL" id="CHEMBL4105827"/>
<dbReference type="DrugBank" id="DB00993">
    <property type="generic name" value="Azathioprine"/>
</dbReference>
<dbReference type="GlyGen" id="Q9NV35">
    <property type="glycosylation" value="1 site, 1 O-linked glycan (1 site)"/>
</dbReference>
<dbReference type="iPTMnet" id="Q9NV35"/>
<dbReference type="PhosphoSitePlus" id="Q9NV35"/>
<dbReference type="BioMuta" id="NUDT15"/>
<dbReference type="DMDM" id="68565944"/>
<dbReference type="jPOST" id="Q9NV35"/>
<dbReference type="MassIVE" id="Q9NV35"/>
<dbReference type="PaxDb" id="9606-ENSP00000258662"/>
<dbReference type="PeptideAtlas" id="Q9NV35"/>
<dbReference type="ProteomicsDB" id="82743"/>
<dbReference type="Pumba" id="Q9NV35"/>
<dbReference type="Antibodypedia" id="49562">
    <property type="antibodies" value="159 antibodies from 22 providers"/>
</dbReference>
<dbReference type="DNASU" id="55270"/>
<dbReference type="Ensembl" id="ENST00000258662.3">
    <property type="protein sequence ID" value="ENSP00000258662.1"/>
    <property type="gene ID" value="ENSG00000136159.4"/>
</dbReference>
<dbReference type="GeneID" id="55270"/>
<dbReference type="KEGG" id="hsa:55270"/>
<dbReference type="MANE-Select" id="ENST00000258662.3">
    <property type="protein sequence ID" value="ENSP00000258662.1"/>
    <property type="RefSeq nucleotide sequence ID" value="NM_018283.4"/>
    <property type="RefSeq protein sequence ID" value="NP_060753.1"/>
</dbReference>
<dbReference type="UCSC" id="uc001vbw.2">
    <property type="organism name" value="human"/>
</dbReference>
<dbReference type="AGR" id="HGNC:23063"/>
<dbReference type="CTD" id="55270"/>
<dbReference type="DisGeNET" id="55270"/>
<dbReference type="GeneCards" id="NUDT15"/>
<dbReference type="HGNC" id="HGNC:23063">
    <property type="gene designation" value="NUDT15"/>
</dbReference>
<dbReference type="HPA" id="ENSG00000136159">
    <property type="expression patterns" value="Low tissue specificity"/>
</dbReference>
<dbReference type="MalaCards" id="NUDT15"/>
<dbReference type="MIM" id="615792">
    <property type="type" value="gene"/>
</dbReference>
<dbReference type="MIM" id="616903">
    <property type="type" value="phenotype"/>
</dbReference>
<dbReference type="neXtProt" id="NX_Q9NV35"/>
<dbReference type="OpenTargets" id="ENSG00000136159"/>
<dbReference type="PharmGKB" id="PA134963132"/>
<dbReference type="VEuPathDB" id="HostDB:ENSG00000136159"/>
<dbReference type="eggNOG" id="ENOG502RXHF">
    <property type="taxonomic scope" value="Eukaryota"/>
</dbReference>
<dbReference type="GeneTree" id="ENSGT00390000003338"/>
<dbReference type="HOGENOM" id="CLU_037162_9_2_1"/>
<dbReference type="InParanoid" id="Q9NV35"/>
<dbReference type="OMA" id="HFEASRN"/>
<dbReference type="OrthoDB" id="447842at2759"/>
<dbReference type="PAN-GO" id="Q9NV35">
    <property type="GO annotations" value="3 GO annotations based on evolutionary models"/>
</dbReference>
<dbReference type="PhylomeDB" id="Q9NV35"/>
<dbReference type="TreeFam" id="TF106353"/>
<dbReference type="PathwayCommons" id="Q9NV35"/>
<dbReference type="Reactome" id="R-HSA-2393930">
    <property type="pathway name" value="Phosphate bond hydrolysis by NUDT proteins"/>
</dbReference>
<dbReference type="Reactome" id="R-HSA-9748787">
    <property type="pathway name" value="Azathioprine ADME"/>
</dbReference>
<dbReference type="SABIO-RK" id="Q9NV35"/>
<dbReference type="SignaLink" id="Q9NV35"/>
<dbReference type="BioGRID-ORCS" id="55270">
    <property type="hits" value="17 hits in 1156 CRISPR screens"/>
</dbReference>
<dbReference type="ChiTaRS" id="NUDT15">
    <property type="organism name" value="human"/>
</dbReference>
<dbReference type="EvolutionaryTrace" id="Q9NV35"/>
<dbReference type="GenomeRNAi" id="55270"/>
<dbReference type="Pharos" id="Q9NV35">
    <property type="development level" value="Tbio"/>
</dbReference>
<dbReference type="PRO" id="PR:Q9NV35"/>
<dbReference type="Proteomes" id="UP000005640">
    <property type="component" value="Chromosome 13"/>
</dbReference>
<dbReference type="RNAct" id="Q9NV35">
    <property type="molecule type" value="protein"/>
</dbReference>
<dbReference type="Bgee" id="ENSG00000136159">
    <property type="expression patterns" value="Expressed in primordial germ cell in gonad and 182 other cell types or tissues"/>
</dbReference>
<dbReference type="GO" id="GO:0005829">
    <property type="term" value="C:cytosol"/>
    <property type="evidence" value="ECO:0000318"/>
    <property type="project" value="GO_Central"/>
</dbReference>
<dbReference type="GO" id="GO:0035539">
    <property type="term" value="F:8-oxo-7,8-dihydrodeoxyguanosine triphosphate pyrophosphatase activity"/>
    <property type="evidence" value="ECO:0000314"/>
    <property type="project" value="UniProtKB"/>
</dbReference>
<dbReference type="GO" id="GO:0008413">
    <property type="term" value="F:8-oxo-7,8-dihydroguanosine triphosphate pyrophosphatase activity"/>
    <property type="evidence" value="ECO:0000314"/>
    <property type="project" value="UniProtKB"/>
</dbReference>
<dbReference type="GO" id="GO:0044715">
    <property type="term" value="F:8-oxo-dGDP phosphatase activity"/>
    <property type="evidence" value="ECO:0000269"/>
    <property type="project" value="Reactome"/>
</dbReference>
<dbReference type="GO" id="GO:0046872">
    <property type="term" value="F:metal ion binding"/>
    <property type="evidence" value="ECO:0007669"/>
    <property type="project" value="UniProtKB-KW"/>
</dbReference>
<dbReference type="GO" id="GO:0047429">
    <property type="term" value="F:nucleoside triphosphate diphosphatase activity"/>
    <property type="evidence" value="ECO:0000314"/>
    <property type="project" value="UniProtKB"/>
</dbReference>
<dbReference type="GO" id="GO:0006203">
    <property type="term" value="P:dGTP catabolic process"/>
    <property type="evidence" value="ECO:0000314"/>
    <property type="project" value="UniProtKB"/>
</dbReference>
<dbReference type="GO" id="GO:0042262">
    <property type="term" value="P:DNA protection"/>
    <property type="evidence" value="ECO:0000315"/>
    <property type="project" value="UniProtKB"/>
</dbReference>
<dbReference type="GO" id="GO:0000278">
    <property type="term" value="P:mitotic cell cycle"/>
    <property type="evidence" value="ECO:0000315"/>
    <property type="project" value="UniProtKB"/>
</dbReference>
<dbReference type="GO" id="GO:0055086">
    <property type="term" value="P:nucleobase-containing small molecule metabolic process"/>
    <property type="evidence" value="ECO:0000304"/>
    <property type="project" value="Reactome"/>
</dbReference>
<dbReference type="GO" id="GO:1901292">
    <property type="term" value="P:nucleoside phosphate catabolic process"/>
    <property type="evidence" value="ECO:0000314"/>
    <property type="project" value="UniProtKB"/>
</dbReference>
<dbReference type="GO" id="GO:0006195">
    <property type="term" value="P:purine nucleotide catabolic process"/>
    <property type="evidence" value="ECO:0000315"/>
    <property type="project" value="UniProtKB"/>
</dbReference>
<dbReference type="GO" id="GO:0061136">
    <property type="term" value="P:regulation of proteasomal protein catabolic process"/>
    <property type="evidence" value="ECO:0000315"/>
    <property type="project" value="UniProtKB"/>
</dbReference>
<dbReference type="GO" id="GO:0000302">
    <property type="term" value="P:response to reactive oxygen species"/>
    <property type="evidence" value="ECO:0007669"/>
    <property type="project" value="Ensembl"/>
</dbReference>
<dbReference type="GO" id="GO:0042178">
    <property type="term" value="P:xenobiotic catabolic process"/>
    <property type="evidence" value="ECO:0000315"/>
    <property type="project" value="UniProtKB"/>
</dbReference>
<dbReference type="CDD" id="cd04678">
    <property type="entry name" value="NUDIX_MTH2_Nudt15"/>
    <property type="match status" value="1"/>
</dbReference>
<dbReference type="FunFam" id="3.90.79.10:FF:000034">
    <property type="entry name" value="Nucleotide triphosphate diphosphatase NUDT15"/>
    <property type="match status" value="1"/>
</dbReference>
<dbReference type="Gene3D" id="3.90.79.10">
    <property type="entry name" value="Nucleoside Triphosphate Pyrophosphohydrolase"/>
    <property type="match status" value="1"/>
</dbReference>
<dbReference type="InterPro" id="IPR015797">
    <property type="entry name" value="NUDIX_hydrolase-like_dom_sf"/>
</dbReference>
<dbReference type="InterPro" id="IPR000086">
    <property type="entry name" value="NUDIX_hydrolase_dom"/>
</dbReference>
<dbReference type="PANTHER" id="PTHR16099">
    <property type="entry name" value="8-OXO-DGTP DIPHOSPHATES NUDT15"/>
    <property type="match status" value="1"/>
</dbReference>
<dbReference type="PANTHER" id="PTHR16099:SF5">
    <property type="entry name" value="NUCLEOTIDE TRIPHOSPHATE DIPHOSPHATASE NUDT15"/>
    <property type="match status" value="1"/>
</dbReference>
<dbReference type="Pfam" id="PF00293">
    <property type="entry name" value="NUDIX"/>
    <property type="match status" value="1"/>
</dbReference>
<dbReference type="SUPFAM" id="SSF55811">
    <property type="entry name" value="Nudix"/>
    <property type="match status" value="1"/>
</dbReference>
<dbReference type="PROSITE" id="PS51462">
    <property type="entry name" value="NUDIX"/>
    <property type="match status" value="1"/>
</dbReference>
<name>NUD15_HUMAN</name>
<proteinExistence type="evidence at protein level"/>
<reference key="1">
    <citation type="journal article" date="2004" name="Nat. Genet.">
        <title>Complete sequencing and characterization of 21,243 full-length human cDNAs.</title>
        <authorList>
            <person name="Ota T."/>
            <person name="Suzuki Y."/>
            <person name="Nishikawa T."/>
            <person name="Otsuki T."/>
            <person name="Sugiyama T."/>
            <person name="Irie R."/>
            <person name="Wakamatsu A."/>
            <person name="Hayashi K."/>
            <person name="Sato H."/>
            <person name="Nagai K."/>
            <person name="Kimura K."/>
            <person name="Makita H."/>
            <person name="Sekine M."/>
            <person name="Obayashi M."/>
            <person name="Nishi T."/>
            <person name="Shibahara T."/>
            <person name="Tanaka T."/>
            <person name="Ishii S."/>
            <person name="Yamamoto J."/>
            <person name="Saito K."/>
            <person name="Kawai Y."/>
            <person name="Isono Y."/>
            <person name="Nakamura Y."/>
            <person name="Nagahari K."/>
            <person name="Murakami K."/>
            <person name="Yasuda T."/>
            <person name="Iwayanagi T."/>
            <person name="Wagatsuma M."/>
            <person name="Shiratori A."/>
            <person name="Sudo H."/>
            <person name="Hosoiri T."/>
            <person name="Kaku Y."/>
            <person name="Kodaira H."/>
            <person name="Kondo H."/>
            <person name="Sugawara M."/>
            <person name="Takahashi M."/>
            <person name="Kanda K."/>
            <person name="Yokoi T."/>
            <person name="Furuya T."/>
            <person name="Kikkawa E."/>
            <person name="Omura Y."/>
            <person name="Abe K."/>
            <person name="Kamihara K."/>
            <person name="Katsuta N."/>
            <person name="Sato K."/>
            <person name="Tanikawa M."/>
            <person name="Yamazaki M."/>
            <person name="Ninomiya K."/>
            <person name="Ishibashi T."/>
            <person name="Yamashita H."/>
            <person name="Murakawa K."/>
            <person name="Fujimori K."/>
            <person name="Tanai H."/>
            <person name="Kimata M."/>
            <person name="Watanabe M."/>
            <person name="Hiraoka S."/>
            <person name="Chiba Y."/>
            <person name="Ishida S."/>
            <person name="Ono Y."/>
            <person name="Takiguchi S."/>
            <person name="Watanabe S."/>
            <person name="Yosida M."/>
            <person name="Hotuta T."/>
            <person name="Kusano J."/>
            <person name="Kanehori K."/>
            <person name="Takahashi-Fujii A."/>
            <person name="Hara H."/>
            <person name="Tanase T.-O."/>
            <person name="Nomura Y."/>
            <person name="Togiya S."/>
            <person name="Komai F."/>
            <person name="Hara R."/>
            <person name="Takeuchi K."/>
            <person name="Arita M."/>
            <person name="Imose N."/>
            <person name="Musashino K."/>
            <person name="Yuuki H."/>
            <person name="Oshima A."/>
            <person name="Sasaki N."/>
            <person name="Aotsuka S."/>
            <person name="Yoshikawa Y."/>
            <person name="Matsunawa H."/>
            <person name="Ichihara T."/>
            <person name="Shiohata N."/>
            <person name="Sano S."/>
            <person name="Moriya S."/>
            <person name="Momiyama H."/>
            <person name="Satoh N."/>
            <person name="Takami S."/>
            <person name="Terashima Y."/>
            <person name="Suzuki O."/>
            <person name="Nakagawa S."/>
            <person name="Senoh A."/>
            <person name="Mizoguchi H."/>
            <person name="Goto Y."/>
            <person name="Shimizu F."/>
            <person name="Wakebe H."/>
            <person name="Hishigaki H."/>
            <person name="Watanabe T."/>
            <person name="Sugiyama A."/>
            <person name="Takemoto M."/>
            <person name="Kawakami B."/>
            <person name="Yamazaki M."/>
            <person name="Watanabe K."/>
            <person name="Kumagai A."/>
            <person name="Itakura S."/>
            <person name="Fukuzumi Y."/>
            <person name="Fujimori Y."/>
            <person name="Komiyama M."/>
            <person name="Tashiro H."/>
            <person name="Tanigami A."/>
            <person name="Fujiwara T."/>
            <person name="Ono T."/>
            <person name="Yamada K."/>
            <person name="Fujii Y."/>
            <person name="Ozaki K."/>
            <person name="Hirao M."/>
            <person name="Ohmori Y."/>
            <person name="Kawabata A."/>
            <person name="Hikiji T."/>
            <person name="Kobatake N."/>
            <person name="Inagaki H."/>
            <person name="Ikema Y."/>
            <person name="Okamoto S."/>
            <person name="Okitani R."/>
            <person name="Kawakami T."/>
            <person name="Noguchi S."/>
            <person name="Itoh T."/>
            <person name="Shigeta K."/>
            <person name="Senba T."/>
            <person name="Matsumura K."/>
            <person name="Nakajima Y."/>
            <person name="Mizuno T."/>
            <person name="Morinaga M."/>
            <person name="Sasaki M."/>
            <person name="Togashi T."/>
            <person name="Oyama M."/>
            <person name="Hata H."/>
            <person name="Watanabe M."/>
            <person name="Komatsu T."/>
            <person name="Mizushima-Sugano J."/>
            <person name="Satoh T."/>
            <person name="Shirai Y."/>
            <person name="Takahashi Y."/>
            <person name="Nakagawa K."/>
            <person name="Okumura K."/>
            <person name="Nagase T."/>
            <person name="Nomura N."/>
            <person name="Kikuchi H."/>
            <person name="Masuho Y."/>
            <person name="Yamashita R."/>
            <person name="Nakai K."/>
            <person name="Yada T."/>
            <person name="Nakamura Y."/>
            <person name="Ohara O."/>
            <person name="Isogai T."/>
            <person name="Sugano S."/>
        </authorList>
    </citation>
    <scope>NUCLEOTIDE SEQUENCE [LARGE SCALE MRNA]</scope>
    <source>
        <tissue>Placenta</tissue>
    </source>
</reference>
<reference key="2">
    <citation type="journal article" date="2004" name="Nature">
        <title>The DNA sequence and analysis of human chromosome 13.</title>
        <authorList>
            <person name="Dunham A."/>
            <person name="Matthews L.H."/>
            <person name="Burton J."/>
            <person name="Ashurst J.L."/>
            <person name="Howe K.L."/>
            <person name="Ashcroft K.J."/>
            <person name="Beare D.M."/>
            <person name="Burford D.C."/>
            <person name="Hunt S.E."/>
            <person name="Griffiths-Jones S."/>
            <person name="Jones M.C."/>
            <person name="Keenan S.J."/>
            <person name="Oliver K."/>
            <person name="Scott C.E."/>
            <person name="Ainscough R."/>
            <person name="Almeida J.P."/>
            <person name="Ambrose K.D."/>
            <person name="Andrews D.T."/>
            <person name="Ashwell R.I.S."/>
            <person name="Babbage A.K."/>
            <person name="Bagguley C.L."/>
            <person name="Bailey J."/>
            <person name="Bannerjee R."/>
            <person name="Barlow K.F."/>
            <person name="Bates K."/>
            <person name="Beasley H."/>
            <person name="Bird C.P."/>
            <person name="Bray-Allen S."/>
            <person name="Brown A.J."/>
            <person name="Brown J.Y."/>
            <person name="Burrill W."/>
            <person name="Carder C."/>
            <person name="Carter N.P."/>
            <person name="Chapman J.C."/>
            <person name="Clamp M.E."/>
            <person name="Clark S.Y."/>
            <person name="Clarke G."/>
            <person name="Clee C.M."/>
            <person name="Clegg S.C."/>
            <person name="Cobley V."/>
            <person name="Collins J.E."/>
            <person name="Corby N."/>
            <person name="Coville G.J."/>
            <person name="Deloukas P."/>
            <person name="Dhami P."/>
            <person name="Dunham I."/>
            <person name="Dunn M."/>
            <person name="Earthrowl M.E."/>
            <person name="Ellington A.G."/>
            <person name="Faulkner L."/>
            <person name="Frankish A.G."/>
            <person name="Frankland J."/>
            <person name="French L."/>
            <person name="Garner P."/>
            <person name="Garnett J."/>
            <person name="Gilbert J.G.R."/>
            <person name="Gilson C.J."/>
            <person name="Ghori J."/>
            <person name="Grafham D.V."/>
            <person name="Gribble S.M."/>
            <person name="Griffiths C."/>
            <person name="Hall R.E."/>
            <person name="Hammond S."/>
            <person name="Harley J.L."/>
            <person name="Hart E.A."/>
            <person name="Heath P.D."/>
            <person name="Howden P.J."/>
            <person name="Huckle E.J."/>
            <person name="Hunt P.J."/>
            <person name="Hunt A.R."/>
            <person name="Johnson C."/>
            <person name="Johnson D."/>
            <person name="Kay M."/>
            <person name="Kimberley A.M."/>
            <person name="King A."/>
            <person name="Laird G.K."/>
            <person name="Langford C.J."/>
            <person name="Lawlor S."/>
            <person name="Leongamornlert D.A."/>
            <person name="Lloyd D.M."/>
            <person name="Lloyd C."/>
            <person name="Loveland J.E."/>
            <person name="Lovell J."/>
            <person name="Martin S."/>
            <person name="Mashreghi-Mohammadi M."/>
            <person name="McLaren S.J."/>
            <person name="McMurray A."/>
            <person name="Milne S."/>
            <person name="Moore M.J.F."/>
            <person name="Nickerson T."/>
            <person name="Palmer S.A."/>
            <person name="Pearce A.V."/>
            <person name="Peck A.I."/>
            <person name="Pelan S."/>
            <person name="Phillimore B."/>
            <person name="Porter K.M."/>
            <person name="Rice C.M."/>
            <person name="Searle S."/>
            <person name="Sehra H.K."/>
            <person name="Shownkeen R."/>
            <person name="Skuce C.D."/>
            <person name="Smith M."/>
            <person name="Steward C.A."/>
            <person name="Sycamore N."/>
            <person name="Tester J."/>
            <person name="Thomas D.W."/>
            <person name="Tracey A."/>
            <person name="Tromans A."/>
            <person name="Tubby B."/>
            <person name="Wall M."/>
            <person name="Wallis J.M."/>
            <person name="West A.P."/>
            <person name="Whitehead S.L."/>
            <person name="Willey D.L."/>
            <person name="Wilming L."/>
            <person name="Wray P.W."/>
            <person name="Wright M.W."/>
            <person name="Young L."/>
            <person name="Coulson A."/>
            <person name="Durbin R.M."/>
            <person name="Hubbard T."/>
            <person name="Sulston J.E."/>
            <person name="Beck S."/>
            <person name="Bentley D.R."/>
            <person name="Rogers J."/>
            <person name="Ross M.T."/>
        </authorList>
    </citation>
    <scope>NUCLEOTIDE SEQUENCE [LARGE SCALE GENOMIC DNA]</scope>
</reference>
<reference key="3">
    <citation type="submission" date="2005-07" db="EMBL/GenBank/DDBJ databases">
        <authorList>
            <person name="Mural R.J."/>
            <person name="Istrail S."/>
            <person name="Sutton G.G."/>
            <person name="Florea L."/>
            <person name="Halpern A.L."/>
            <person name="Mobarry C.M."/>
            <person name="Lippert R."/>
            <person name="Walenz B."/>
            <person name="Shatkay H."/>
            <person name="Dew I."/>
            <person name="Miller J.R."/>
            <person name="Flanigan M.J."/>
            <person name="Edwards N.J."/>
            <person name="Bolanos R."/>
            <person name="Fasulo D."/>
            <person name="Halldorsson B.V."/>
            <person name="Hannenhalli S."/>
            <person name="Turner R."/>
            <person name="Yooseph S."/>
            <person name="Lu F."/>
            <person name="Nusskern D.R."/>
            <person name="Shue B.C."/>
            <person name="Zheng X.H."/>
            <person name="Zhong F."/>
            <person name="Delcher A.L."/>
            <person name="Huson D.H."/>
            <person name="Kravitz S.A."/>
            <person name="Mouchard L."/>
            <person name="Reinert K."/>
            <person name="Remington K.A."/>
            <person name="Clark A.G."/>
            <person name="Waterman M.S."/>
            <person name="Eichler E.E."/>
            <person name="Adams M.D."/>
            <person name="Hunkapiller M.W."/>
            <person name="Myers E.W."/>
            <person name="Venter J.C."/>
        </authorList>
    </citation>
    <scope>NUCLEOTIDE SEQUENCE [LARGE SCALE GENOMIC DNA]</scope>
</reference>
<reference key="4">
    <citation type="journal article" date="2004" name="Genome Res.">
        <title>The status, quality, and expansion of the NIH full-length cDNA project: the Mammalian Gene Collection (MGC).</title>
        <authorList>
            <consortium name="The MGC Project Team"/>
        </authorList>
    </citation>
    <scope>NUCLEOTIDE SEQUENCE [LARGE SCALE MRNA]</scope>
    <source>
        <tissue>Lymph</tissue>
    </source>
</reference>
<reference key="5">
    <citation type="journal article" date="1996" name="J. Biol. Chem.">
        <title>The MutT proteins or 'Nudix' hydrolases, a family of versatile, widely distributed, 'housecleaning' enzymes.</title>
        <authorList>
            <person name="Bessman M.J."/>
            <person name="Frick D.N."/>
            <person name="O'Handley S.F."/>
        </authorList>
    </citation>
    <scope>NOMENCLATURE</scope>
</reference>
<reference key="6">
    <citation type="journal article" date="2009" name="J. Biol. Chem.">
        <title>Proliferating cell nuclear antigen is protected from degradation by forming a complex with MutT Homolog2.</title>
        <authorList>
            <person name="Yu Y."/>
            <person name="Cai J.-P."/>
            <person name="Tu B."/>
            <person name="Wu L."/>
            <person name="Zhao Y."/>
            <person name="Liu X."/>
            <person name="Li L."/>
            <person name="McNutt M.A."/>
            <person name="Feng J."/>
            <person name="He Q."/>
            <person name="Yang Y."/>
            <person name="Wang H."/>
            <person name="Sekiguchi M."/>
            <person name="Zhu W.-G."/>
        </authorList>
    </citation>
    <scope>FUNCTION</scope>
    <scope>INTERACTION WITH PCNA</scope>
</reference>
<reference key="7">
    <citation type="journal article" date="2011" name="BMC Syst. Biol.">
        <title>Initial characterization of the human central proteome.</title>
        <authorList>
            <person name="Burkard T.R."/>
            <person name="Planyavsky M."/>
            <person name="Kaupe I."/>
            <person name="Breitwieser F.P."/>
            <person name="Buerckstuemmer T."/>
            <person name="Bennett K.L."/>
            <person name="Superti-Furga G."/>
            <person name="Colinge J."/>
        </authorList>
    </citation>
    <scope>IDENTIFICATION BY MASS SPECTROMETRY [LARGE SCALE ANALYSIS]</scope>
</reference>
<reference key="8">
    <citation type="journal article" date="2012" name="J. Biol. Chem.">
        <title>Human MTH3 (NUDT18) protein hydrolyzes oxidized forms of guanosine and deoxyguanosine diphosphates: comparison with MTH1 and MTH2.</title>
        <authorList>
            <person name="Takagi Y."/>
            <person name="Setoyama D."/>
            <person name="Ito R."/>
            <person name="Kamiya H."/>
            <person name="Yamagata Y."/>
            <person name="Sekiguchi M."/>
        </authorList>
    </citation>
    <scope>FUNCTION</scope>
    <scope>CATALYTIC ACTIVITY</scope>
</reference>
<reference key="9">
    <citation type="journal article" date="2014" name="Nat. Genet.">
        <title>A common missense variant in NUDT15 confers susceptibility to thiopurine-induced leukopenia.</title>
        <authorList>
            <person name="Yang S.K."/>
            <person name="Hong M."/>
            <person name="Baek J."/>
            <person name="Choi H."/>
            <person name="Zhao W."/>
            <person name="Jung Y."/>
            <person name="Haritunians T."/>
            <person name="Ye B.D."/>
            <person name="Kim K.J."/>
            <person name="Park S.H."/>
            <person name="Park S.K."/>
            <person name="Yang D.H."/>
            <person name="Dubinsky M."/>
            <person name="Lee I."/>
            <person name="McGovern D.P."/>
            <person name="Liu J."/>
            <person name="Song K."/>
        </authorList>
    </citation>
    <scope>POLYMORPHISM</scope>
    <scope>VARIANT CYS-139</scope>
</reference>
<reference key="10">
    <citation type="journal article" date="2016" name="Nat. Genet.">
        <title>NUDT15 polymorphisms alter thiopurine metabolism and hematopoietic toxicity.</title>
        <authorList>
            <person name="Moriyama T."/>
            <person name="Nishii R."/>
            <person name="Perez-Andreu V."/>
            <person name="Yang W."/>
            <person name="Klussmann F.A."/>
            <person name="Zhao X."/>
            <person name="Lin T.N."/>
            <person name="Hoshitsuki K."/>
            <person name="Nersting J."/>
            <person name="Kihira K."/>
            <person name="Hofmann U."/>
            <person name="Komada Y."/>
            <person name="Kato M."/>
            <person name="McCorkle R."/>
            <person name="Li L."/>
            <person name="Koh K."/>
            <person name="Najera C.R."/>
            <person name="Kham S.K."/>
            <person name="Isobe T."/>
            <person name="Chen Z."/>
            <person name="Chiew E.K."/>
            <person name="Bhojwani D."/>
            <person name="Jeffries C."/>
            <person name="Lu Y."/>
            <person name="Schwab M."/>
            <person name="Inaba H."/>
            <person name="Pui C.H."/>
            <person name="Relling M.V."/>
            <person name="Manabe A."/>
            <person name="Hori H."/>
            <person name="Schmiegelow K."/>
            <person name="Yeoh A.E."/>
            <person name="Evans W.E."/>
            <person name="Yang J.J."/>
        </authorList>
    </citation>
    <scope>POLYMORPHISM</scope>
    <scope>VARIANTS ILE-18; GLY-VAL-18 INS; CYS-139 AND HIS-139</scope>
    <scope>CHARACTERIZATION OF VARIANTS ILE-18; GLY-VAL-18 INS; CYS-139 AND HIS-139</scope>
    <scope>CATALYTIC ACTIVITY</scope>
</reference>
<reference key="11">
    <citation type="journal article" date="2015" name="Nat. Commun.">
        <title>Crystal structure, biochemical and cellular activities demonstrate separate functions of MTH1 and MTH2.</title>
        <authorList>
            <person name="Carter M."/>
            <person name="Jemth A.S."/>
            <person name="Hagenkort A."/>
            <person name="Page B.D."/>
            <person name="Gustafsson R."/>
            <person name="Griese J.J."/>
            <person name="Gad H."/>
            <person name="Valerie N.C."/>
            <person name="Desroses M."/>
            <person name="Bostrom J."/>
            <person name="Warpman Berglund U."/>
            <person name="Helleday T."/>
            <person name="Stenmark P."/>
        </authorList>
    </citation>
    <scope>X-RAY CRYSTALLOGRAPHY (1.80 ANGSTROMS)</scope>
    <scope>SUBUNIT</scope>
    <scope>CATALYTIC ACTIVITY</scope>
    <scope>BIOPHYSICOCHEMICAL PROPERTIES</scope>
</reference>
<comment type="function">
    <text evidence="2 4 5 6 7">May catalyze the hydrolysis of nucleoside triphosphates including dGTP, dTTP, dCTP, their oxidized forms like 8-oxo-dGTP and the prodrug thiopurine derivatives 6-thio-dGTP and 6-thio-GTP (PubMed:26238318). Could also catalyze the hydrolysis of some nucleoside diphosphate derivatives (PubMed:22556419, PubMed:26238318). Hydrolyzes oxidized nucleosides triphosphates like 8-oxo-dGTP in vitro, but the specificity and efficiency towards these substrates are low. Therefore, the potential in vivo sanitizing role of this enzyme, that would consist in removing oxidatively damaged forms of nucleosides to prevent their incorporation into DNA, is unclear (PubMed:22556419, PubMed:26238318). Through the hydrolysis of thioguanosine triphosphates may participate in the catabolism of thiopurine drugs (PubMed:25108385, PubMed:26238318). May also have a role in DNA synthesis and cell cycle progression by stabilizing PCNA (PubMed:19419956). Exhibits decapping activity towards dpCoA-capped RNAs in vitro (By similarity).</text>
</comment>
<comment type="catalytic activity">
    <reaction evidence="7">
        <text>a ribonucleoside 5'-triphosphate + H2O = a ribonucleoside 5'-phosphate + diphosphate + H(+)</text>
        <dbReference type="Rhea" id="RHEA:23996"/>
        <dbReference type="ChEBI" id="CHEBI:15377"/>
        <dbReference type="ChEBI" id="CHEBI:15378"/>
        <dbReference type="ChEBI" id="CHEBI:33019"/>
        <dbReference type="ChEBI" id="CHEBI:58043"/>
        <dbReference type="ChEBI" id="CHEBI:61557"/>
        <dbReference type="EC" id="3.6.1.9"/>
    </reaction>
</comment>
<comment type="catalytic activity">
    <reaction evidence="7">
        <text>a 2'-deoxyribonucleoside 5'-triphosphate + H2O = a 2'-deoxyribonucleoside 5'-phosphate + diphosphate + H(+)</text>
        <dbReference type="Rhea" id="RHEA:44644"/>
        <dbReference type="ChEBI" id="CHEBI:15377"/>
        <dbReference type="ChEBI" id="CHEBI:15378"/>
        <dbReference type="ChEBI" id="CHEBI:33019"/>
        <dbReference type="ChEBI" id="CHEBI:61560"/>
        <dbReference type="ChEBI" id="CHEBI:65317"/>
        <dbReference type="EC" id="3.6.1.9"/>
    </reaction>
</comment>
<comment type="catalytic activity">
    <reaction evidence="2">
        <text>a 5'-end CoA-ribonucleoside in mRNA + H2O = a 5'-end phospho-adenosine-phospho-ribonucleoside in mRNA + (R)-4'-phosphopantetheine + 2 H(+)</text>
        <dbReference type="Rhea" id="RHEA:67592"/>
        <dbReference type="Rhea" id="RHEA-COMP:15719"/>
        <dbReference type="Rhea" id="RHEA-COMP:17276"/>
        <dbReference type="ChEBI" id="CHEBI:15377"/>
        <dbReference type="ChEBI" id="CHEBI:15378"/>
        <dbReference type="ChEBI" id="CHEBI:61723"/>
        <dbReference type="ChEBI" id="CHEBI:144051"/>
        <dbReference type="ChEBI" id="CHEBI:172371"/>
    </reaction>
    <physiologicalReaction direction="left-to-right" evidence="2">
        <dbReference type="Rhea" id="RHEA:67593"/>
    </physiologicalReaction>
</comment>
<comment type="cofactor">
    <cofactor evidence="2">
        <name>Mg(2+)</name>
        <dbReference type="ChEBI" id="CHEBI:18420"/>
    </cofactor>
    <cofactor evidence="2">
        <name>Mn(2+)</name>
        <dbReference type="ChEBI" id="CHEBI:29035"/>
    </cofactor>
    <text evidence="2">Magnesium may be the real cofactor in vivo.</text>
</comment>
<comment type="biophysicochemical properties">
    <kinetics>
        <KM evidence="7">42 uM for dGTP (at pH 7.5)</KM>
        <KM evidence="7">110 uM for 8-oxo-dGTP (at pH 7.5)</KM>
        <text evidence="7">Has a 10-fold higher catalytic efficiency toward dGTP compared to 8-oxo-dGTP.</text>
    </kinetics>
</comment>
<comment type="subunit">
    <text evidence="4 7">Homodimer (PubMed:26238318). Interacts with PCNA; interaction is disrupted in response to UV irradiation (PubMed:19419956).</text>
</comment>
<comment type="interaction">
    <interactant intactId="EBI-3924801">
        <id>Q9NV35</id>
    </interactant>
    <interactant intactId="EBI-720116">
        <id>P60520</id>
        <label>GABARAPL2</label>
    </interactant>
    <organismsDiffer>false</organismsDiffer>
    <experiments>3</experiments>
</comment>
<comment type="polymorphism">
    <text evidence="6 8">Polymorphic NUDT15 variants define the poor metabolism of thiopurines 2 genetic locus (THPM2) [MIM:616903]. Thiopurines are used as immunosuppressants or cytotoxic drugs and are prescribed for a variety of clinical conditions including leukemia, autoimmune disease and organ transplantation. Patients with low NUDT15 activities have an increased risk for toxic effects after receiving standard doses of thiopurine drugs.</text>
</comment>
<comment type="similarity">
    <text evidence="11">Belongs to the Nudix hydrolase family.</text>
</comment>
<evidence type="ECO:0000250" key="1"/>
<evidence type="ECO:0000250" key="2">
    <source>
        <dbReference type="UniProtKB" id="Q8BG93"/>
    </source>
</evidence>
<evidence type="ECO:0000255" key="3">
    <source>
        <dbReference type="PROSITE-ProRule" id="PRU00794"/>
    </source>
</evidence>
<evidence type="ECO:0000269" key="4">
    <source>
    </source>
</evidence>
<evidence type="ECO:0000269" key="5">
    <source>
    </source>
</evidence>
<evidence type="ECO:0000269" key="6">
    <source>
    </source>
</evidence>
<evidence type="ECO:0000269" key="7">
    <source>
    </source>
</evidence>
<evidence type="ECO:0000269" key="8">
    <source>
    </source>
</evidence>
<evidence type="ECO:0000303" key="9">
    <source>
    </source>
</evidence>
<evidence type="ECO:0000303" key="10">
    <source>
    </source>
</evidence>
<evidence type="ECO:0000305" key="11"/>
<evidence type="ECO:0000312" key="12">
    <source>
        <dbReference type="HGNC" id="HGNC:23063"/>
    </source>
</evidence>
<evidence type="ECO:0007829" key="13">
    <source>
        <dbReference type="PDB" id="5LPG"/>
    </source>
</evidence>
<evidence type="ECO:0007829" key="14">
    <source>
        <dbReference type="PDB" id="7B66"/>
    </source>
</evidence>
<evidence type="ECO:0007829" key="15">
    <source>
        <dbReference type="PDB" id="7B67"/>
    </source>
</evidence>
<keyword id="KW-0002">3D-structure</keyword>
<keyword id="KW-0378">Hydrolase</keyword>
<keyword id="KW-0460">Magnesium</keyword>
<keyword id="KW-0464">Manganese</keyword>
<keyword id="KW-0479">Metal-binding</keyword>
<keyword id="KW-1267">Proteomics identification</keyword>
<keyword id="KW-1185">Reference proteome</keyword>
<sequence length="164" mass="18609">MTASAQPRGRRPGVGVGVVVTSCKHPRCVLLGKRKGSVGAGSFQLPGGHLEFGETWEECAQRETWEEAALHLKNVHFASVVNSFIEKENYHYVTILMKGEVDVTHDSEPKNVEPEKNESWEWVPWEELPPLDQLFWGLRCLKEQGYDPFKEDLNHLVGYKGNHL</sequence>
<gene>
    <name evidence="12" type="primary">NUDT15</name>
    <name evidence="9" type="synonym">MTH2</name>
</gene>
<protein>
    <recommendedName>
        <fullName evidence="11">Nucleotide triphosphate diphosphatase NUDT15</fullName>
        <ecNumber evidence="5 7 8">3.6.1.9</ecNumber>
    </recommendedName>
    <alternativeName>
        <fullName evidence="9">MutT homolog 2</fullName>
        <shortName evidence="9">MTH2</shortName>
    </alternativeName>
    <alternativeName>
        <fullName evidence="11">Nucleoside diphosphate-linked moiety X motif 15</fullName>
        <shortName evidence="11">Nudix motif 15</shortName>
    </alternativeName>
    <alternativeName>
        <fullName evidence="10">Nucleoside diphosphate-linked to another moiety X hydrolase 15</fullName>
        <shortName evidence="12">Nudix hydrolase 15</shortName>
    </alternativeName>
</protein>
<feature type="chain" id="PRO_0000057115" description="Nucleotide triphosphate diphosphatase NUDT15">
    <location>
        <begin position="1"/>
        <end position="164"/>
    </location>
</feature>
<feature type="domain" description="Nudix hydrolase" evidence="3">
    <location>
        <begin position="9"/>
        <end position="145"/>
    </location>
</feature>
<feature type="region of interest" description="Interaction with PCNA" evidence="4">
    <location>
        <begin position="76"/>
        <end position="164"/>
    </location>
</feature>
<feature type="short sequence motif" description="Nudix box">
    <location>
        <begin position="48"/>
        <end position="69"/>
    </location>
</feature>
<feature type="binding site" evidence="1">
    <location>
        <position position="63"/>
    </location>
    <ligand>
        <name>Mg(2+)</name>
        <dbReference type="ChEBI" id="CHEBI:18420"/>
    </ligand>
</feature>
<feature type="binding site" evidence="1">
    <location>
        <position position="67"/>
    </location>
    <ligand>
        <name>Mg(2+)</name>
        <dbReference type="ChEBI" id="CHEBI:18420"/>
    </ligand>
</feature>
<feature type="sequence variant" id="VAR_076806" description="Risk factor for thiopurines toxicity; decreased thermostability; decreased diphosphatase activity towards 6-thio-dGTP and 6-thio-GTP; dbSNP:rs186364861." evidence="8">
    <original>V</original>
    <variation>I</variation>
    <location>
        <position position="18"/>
    </location>
</feature>
<feature type="sequence variant" id="VAR_076807" description="Risk factor for thiopurines toxicity; decreased thermostability; decreased diphosphatase activity towards 6-thio-dGTP and 6-thio-GTP." evidence="8">
    <original>V</original>
    <variation>VGV</variation>
    <location>
        <position position="18"/>
    </location>
</feature>
<feature type="sequence variant" id="VAR_076808" description="Risk factor for thiopurines toxicity; decreased thermostability; loss of diphosphatase activity towards 6-thio-dGTP and 6-thio-GTP; dbSNP:rs116855232." evidence="6 8">
    <original>R</original>
    <variation>C</variation>
    <location>
        <position position="139"/>
    </location>
</feature>
<feature type="sequence variant" id="VAR_076809" description="Risk factor for thiopurines toxicity; decreased thermostability; decreased diphosphatase activity towards 6-thio-dGTP and 6-thio-GTP; dbSNP:rs147390019." evidence="8">
    <original>R</original>
    <variation>H</variation>
    <location>
        <position position="139"/>
    </location>
</feature>
<feature type="helix" evidence="14">
    <location>
        <begin position="8"/>
        <end position="10"/>
    </location>
</feature>
<feature type="strand" evidence="15">
    <location>
        <begin position="15"/>
        <end position="21"/>
    </location>
</feature>
<feature type="strand" evidence="15">
    <location>
        <begin position="28"/>
        <end position="34"/>
    </location>
</feature>
<feature type="turn" evidence="15">
    <location>
        <begin position="38"/>
        <end position="41"/>
    </location>
</feature>
<feature type="strand" evidence="13">
    <location>
        <begin position="42"/>
        <end position="44"/>
    </location>
</feature>
<feature type="strand" evidence="15">
    <location>
        <begin position="46"/>
        <end position="49"/>
    </location>
</feature>
<feature type="helix" evidence="15">
    <location>
        <begin position="56"/>
        <end position="68"/>
    </location>
</feature>
<feature type="strand" evidence="15">
    <location>
        <begin position="72"/>
        <end position="85"/>
    </location>
</feature>
<feature type="helix" evidence="15">
    <location>
        <begin position="86"/>
        <end position="88"/>
    </location>
</feature>
<feature type="strand" evidence="15">
    <location>
        <begin position="90"/>
        <end position="101"/>
    </location>
</feature>
<feature type="turn" evidence="15">
    <location>
        <begin position="114"/>
        <end position="116"/>
    </location>
</feature>
<feature type="strand" evidence="15">
    <location>
        <begin position="117"/>
        <end position="124"/>
    </location>
</feature>
<feature type="helix" evidence="15">
    <location>
        <begin position="125"/>
        <end position="127"/>
    </location>
</feature>
<feature type="helix" evidence="15">
    <location>
        <begin position="131"/>
        <end position="133"/>
    </location>
</feature>
<feature type="helix" evidence="15">
    <location>
        <begin position="136"/>
        <end position="143"/>
    </location>
</feature>
<feature type="helix" evidence="15">
    <location>
        <begin position="154"/>
        <end position="156"/>
    </location>
</feature>